<evidence type="ECO:0000255" key="1">
    <source>
        <dbReference type="HAMAP-Rule" id="MF_00502"/>
    </source>
</evidence>
<evidence type="ECO:0000305" key="2"/>
<accession>Q9JZQ4</accession>
<organism>
    <name type="scientific">Neisseria meningitidis serogroup B (strain ATCC BAA-335 / MC58)</name>
    <dbReference type="NCBI Taxonomy" id="122586"/>
    <lineage>
        <taxon>Bacteria</taxon>
        <taxon>Pseudomonadati</taxon>
        <taxon>Pseudomonadota</taxon>
        <taxon>Betaproteobacteria</taxon>
        <taxon>Neisseriales</taxon>
        <taxon>Neisseriaceae</taxon>
        <taxon>Neisseria</taxon>
    </lineage>
</organism>
<dbReference type="EMBL" id="AE002098">
    <property type="protein sequence ID" value="AAF41348.1"/>
    <property type="molecule type" value="Genomic_DNA"/>
</dbReference>
<dbReference type="PIR" id="C81140">
    <property type="entry name" value="C81140"/>
</dbReference>
<dbReference type="RefSeq" id="NP_273980.1">
    <property type="nucleotide sequence ID" value="NC_003112.2"/>
</dbReference>
<dbReference type="RefSeq" id="WP_002217400.1">
    <property type="nucleotide sequence ID" value="NC_003112.2"/>
</dbReference>
<dbReference type="SMR" id="Q9JZQ4"/>
<dbReference type="FunCoup" id="Q9JZQ4">
    <property type="interactions" value="84"/>
</dbReference>
<dbReference type="STRING" id="122586.NMB0942"/>
<dbReference type="PaxDb" id="122586-NMB0942"/>
<dbReference type="KEGG" id="nme:NMB0942"/>
<dbReference type="PATRIC" id="fig|122586.8.peg.1197"/>
<dbReference type="HOGENOM" id="CLU_114306_2_1_4"/>
<dbReference type="InParanoid" id="Q9JZQ4"/>
<dbReference type="OrthoDB" id="9803251at2"/>
<dbReference type="Proteomes" id="UP000000425">
    <property type="component" value="Chromosome"/>
</dbReference>
<dbReference type="GO" id="GO:1990904">
    <property type="term" value="C:ribonucleoprotein complex"/>
    <property type="evidence" value="ECO:0007669"/>
    <property type="project" value="UniProtKB-KW"/>
</dbReference>
<dbReference type="GO" id="GO:0005840">
    <property type="term" value="C:ribosome"/>
    <property type="evidence" value="ECO:0007669"/>
    <property type="project" value="UniProtKB-KW"/>
</dbReference>
<dbReference type="GO" id="GO:0003735">
    <property type="term" value="F:structural constituent of ribosome"/>
    <property type="evidence" value="ECO:0007669"/>
    <property type="project" value="InterPro"/>
</dbReference>
<dbReference type="GO" id="GO:0006412">
    <property type="term" value="P:translation"/>
    <property type="evidence" value="ECO:0007669"/>
    <property type="project" value="UniProtKB-UniRule"/>
</dbReference>
<dbReference type="Gene3D" id="4.10.830.30">
    <property type="entry name" value="Ribosomal protein L31"/>
    <property type="match status" value="1"/>
</dbReference>
<dbReference type="HAMAP" id="MF_00502">
    <property type="entry name" value="Ribosomal_bL31_2"/>
    <property type="match status" value="1"/>
</dbReference>
<dbReference type="InterPro" id="IPR034704">
    <property type="entry name" value="Ribosomal_bL28/bL31-like_sf"/>
</dbReference>
<dbReference type="InterPro" id="IPR002150">
    <property type="entry name" value="Ribosomal_bL31"/>
</dbReference>
<dbReference type="InterPro" id="IPR027493">
    <property type="entry name" value="Ribosomal_bL31_B"/>
</dbReference>
<dbReference type="InterPro" id="IPR042105">
    <property type="entry name" value="Ribosomal_bL31_sf"/>
</dbReference>
<dbReference type="NCBIfam" id="TIGR00105">
    <property type="entry name" value="L31"/>
    <property type="match status" value="1"/>
</dbReference>
<dbReference type="NCBIfam" id="NF002462">
    <property type="entry name" value="PRK01678.1"/>
    <property type="match status" value="1"/>
</dbReference>
<dbReference type="PANTHER" id="PTHR33280">
    <property type="entry name" value="50S RIBOSOMAL PROTEIN L31, CHLOROPLASTIC"/>
    <property type="match status" value="1"/>
</dbReference>
<dbReference type="PANTHER" id="PTHR33280:SF1">
    <property type="entry name" value="LARGE RIBOSOMAL SUBUNIT PROTEIN BL31C"/>
    <property type="match status" value="1"/>
</dbReference>
<dbReference type="Pfam" id="PF01197">
    <property type="entry name" value="Ribosomal_L31"/>
    <property type="match status" value="1"/>
</dbReference>
<dbReference type="PRINTS" id="PR01249">
    <property type="entry name" value="RIBOSOMALL31"/>
</dbReference>
<dbReference type="SUPFAM" id="SSF143800">
    <property type="entry name" value="L28p-like"/>
    <property type="match status" value="1"/>
</dbReference>
<dbReference type="PROSITE" id="PS01143">
    <property type="entry name" value="RIBOSOMAL_L31"/>
    <property type="match status" value="1"/>
</dbReference>
<sequence>MKPNIHPDNYRTVLFFDSSANEGWLIRSCAETHGKTMVWTDGKEYPLFSLDTSSASHPVYTGKQRNVNTEGRASKFNQRFQSVMSSFRKDK</sequence>
<keyword id="KW-1185">Reference proteome</keyword>
<keyword id="KW-0687">Ribonucleoprotein</keyword>
<keyword id="KW-0689">Ribosomal protein</keyword>
<protein>
    <recommendedName>
        <fullName evidence="1">Large ribosomal subunit protein bL31B</fullName>
    </recommendedName>
    <alternativeName>
        <fullName evidence="2">50S ribosomal protein L31 type B</fullName>
    </alternativeName>
</protein>
<comment type="subunit">
    <text evidence="1">Part of the 50S ribosomal subunit.</text>
</comment>
<comment type="similarity">
    <text evidence="1">Belongs to the bacterial ribosomal protein bL31 family. Type B subfamily.</text>
</comment>
<name>RL31B_NEIMB</name>
<proteinExistence type="inferred from homology"/>
<reference key="1">
    <citation type="journal article" date="2000" name="Science">
        <title>Complete genome sequence of Neisseria meningitidis serogroup B strain MC58.</title>
        <authorList>
            <person name="Tettelin H."/>
            <person name="Saunders N.J."/>
            <person name="Heidelberg J.F."/>
            <person name="Jeffries A.C."/>
            <person name="Nelson K.E."/>
            <person name="Eisen J.A."/>
            <person name="Ketchum K.A."/>
            <person name="Hood D.W."/>
            <person name="Peden J.F."/>
            <person name="Dodson R.J."/>
            <person name="Nelson W.C."/>
            <person name="Gwinn M.L."/>
            <person name="DeBoy R.T."/>
            <person name="Peterson J.D."/>
            <person name="Hickey E.K."/>
            <person name="Haft D.H."/>
            <person name="Salzberg S.L."/>
            <person name="White O."/>
            <person name="Fleischmann R.D."/>
            <person name="Dougherty B.A."/>
            <person name="Mason T.M."/>
            <person name="Ciecko A."/>
            <person name="Parksey D.S."/>
            <person name="Blair E."/>
            <person name="Cittone H."/>
            <person name="Clark E.B."/>
            <person name="Cotton M.D."/>
            <person name="Utterback T.R."/>
            <person name="Khouri H.M."/>
            <person name="Qin H."/>
            <person name="Vamathevan J.J."/>
            <person name="Gill J."/>
            <person name="Scarlato V."/>
            <person name="Masignani V."/>
            <person name="Pizza M."/>
            <person name="Grandi G."/>
            <person name="Sun L."/>
            <person name="Smith H.O."/>
            <person name="Fraser C.M."/>
            <person name="Moxon E.R."/>
            <person name="Rappuoli R."/>
            <person name="Venter J.C."/>
        </authorList>
    </citation>
    <scope>NUCLEOTIDE SEQUENCE [LARGE SCALE GENOMIC DNA]</scope>
    <source>
        <strain>ATCC BAA-335 / MC58</strain>
    </source>
</reference>
<gene>
    <name evidence="1" type="primary">rpmE2</name>
    <name type="ordered locus">NMB0942</name>
</gene>
<feature type="chain" id="PRO_0000173240" description="Large ribosomal subunit protein bL31B">
    <location>
        <begin position="1"/>
        <end position="91"/>
    </location>
</feature>